<reference key="1">
    <citation type="journal article" date="1995" name="Gene">
        <title>Sequences of the cDNAs encoding canine parathyroid hormone-related protein and parathyroid hormone.</title>
        <authorList>
            <person name="Rosol T.J."/>
            <person name="Steinmeyer C.L."/>
            <person name="McCauley L.K."/>
            <person name="Groene A."/>
            <person name="DeWille J.W."/>
            <person name="Capen C.C."/>
        </authorList>
    </citation>
    <scope>NUCLEOTIDE SEQUENCE [MRNA]</scope>
    <source>
        <tissue>Anal sac</tissue>
    </source>
</reference>
<protein>
    <recommendedName>
        <fullName>Parathyroid hormone-related protein</fullName>
        <shortName>PTH-rP</shortName>
        <shortName>PTHrP</shortName>
    </recommendedName>
    <component>
        <recommendedName>
            <fullName>Osteostatin</fullName>
        </recommendedName>
    </component>
</protein>
<sequence length="177" mass="20299">MLRRLVQQWGVAVFLLSYSVPSCGRSVEELGRRLKRAVSEHQLLHDKGKSIQDLRRRFFLHHLIAEIHTAEIRATSEVSPNSKPAPNTKNHPVRFGSDDEGRYLTQETNKVETYKEQPLKTPGKKKKGKPGKRKEQEKKKRRTRSAWLNSGVAESGLEGDHPYDISATSLELNLRRH</sequence>
<comment type="function">
    <text evidence="1 2">Neuroendocrine peptide which is a critical regulator of cellular and organ growth, development, migration, differentiation and survival and of epithelial calcium ion transport (By similarity). Acts by binding to its receptor, PTH1R, activating G protein-coupled receptor signaling (By similarity). Regulates endochondral bone development and epithelial-mesenchymal interactions during the formation of the mammary glands and teeth (By similarity). Required for skeletal homeostasis. Promotes mammary mesenchyme differentiation and bud outgrowth by modulating mesenchymal cell responsiveness to BMPs (By similarity). Up-regulates BMPR1A expression in the mammary mesenchyme and this increases the sensitivity of these cells to BMPs and allows them to respond to BMP4 in a paracrine and/or autocrine fashion. BMP4 signaling in the mesenchyme, in turn, triggers epithelial outgrowth and augments MSX2 expression, which causes the mammary mesenchyme to inhibit hair follicle formation within the nipple sheath (By similarity).</text>
</comment>
<comment type="function">
    <molecule>Osteostatin</molecule>
    <text evidence="1">Potent inhibitor of osteoclastic bone resorption.</text>
</comment>
<comment type="subunit">
    <text evidence="1">PTHrP interacts with PTH1R (via N-terminal extracellular domain).</text>
</comment>
<comment type="subcellular location">
    <subcellularLocation>
        <location evidence="1">Secreted</location>
    </subcellularLocation>
    <subcellularLocation>
        <location evidence="1">Cytoplasm</location>
    </subcellularLocation>
    <subcellularLocation>
        <location evidence="1">Nucleus</location>
    </subcellularLocation>
</comment>
<comment type="PTM">
    <text evidence="1">There are several secretory forms, including osteostatin, arising from endoproteolytic cleavage of the initial translation product. Each of these secretory forms is believed to have one or more of its own receptors that mediates the normal paracrine, autocrine and endocrine actions (By similarity).</text>
</comment>
<comment type="similarity">
    <text evidence="5">Belongs to the parathyroid hormone family.</text>
</comment>
<dbReference type="EMBL" id="U15593">
    <property type="protein sequence ID" value="AAA82583.1"/>
    <property type="molecule type" value="mRNA"/>
</dbReference>
<dbReference type="PIR" id="JC4201">
    <property type="entry name" value="JC4201"/>
</dbReference>
<dbReference type="RefSeq" id="NP_001003303.1">
    <property type="nucleotide sequence ID" value="NM_001003303.1"/>
</dbReference>
<dbReference type="RefSeq" id="XP_005636738.1">
    <property type="nucleotide sequence ID" value="XM_005636681.2"/>
</dbReference>
<dbReference type="RefSeq" id="XP_013963722.1">
    <property type="nucleotide sequence ID" value="XM_014108247.1"/>
</dbReference>
<dbReference type="RefSeq" id="XP_013963723.1">
    <property type="nucleotide sequence ID" value="XM_014108248.1"/>
</dbReference>
<dbReference type="RefSeq" id="XP_013963724.1">
    <property type="nucleotide sequence ID" value="XM_014108249.1"/>
</dbReference>
<dbReference type="RefSeq" id="XP_013963725.1">
    <property type="nucleotide sequence ID" value="XM_014108250.1"/>
</dbReference>
<dbReference type="RefSeq" id="XP_022266553.1">
    <property type="nucleotide sequence ID" value="XM_022410845.2"/>
</dbReference>
<dbReference type="RefSeq" id="XP_022266554.1">
    <property type="nucleotide sequence ID" value="XM_022410846.2"/>
</dbReference>
<dbReference type="RefSeq" id="XP_022266555.1">
    <property type="nucleotide sequence ID" value="XM_022410847.2"/>
</dbReference>
<dbReference type="RefSeq" id="XP_022266556.1">
    <property type="nucleotide sequence ID" value="XM_022410848.2"/>
</dbReference>
<dbReference type="RefSeq" id="XP_022266557.1">
    <property type="nucleotide sequence ID" value="XM_022410849.2"/>
</dbReference>
<dbReference type="RefSeq" id="XP_038294575.1">
    <property type="nucleotide sequence ID" value="XM_038438647.1"/>
</dbReference>
<dbReference type="RefSeq" id="XP_038294576.1">
    <property type="nucleotide sequence ID" value="XM_038438648.1"/>
</dbReference>
<dbReference type="RefSeq" id="XP_038294577.1">
    <property type="nucleotide sequence ID" value="XM_038438649.1"/>
</dbReference>
<dbReference type="RefSeq" id="XP_038294578.1">
    <property type="nucleotide sequence ID" value="XM_038438650.1"/>
</dbReference>
<dbReference type="RefSeq" id="XP_038294579.1">
    <property type="nucleotide sequence ID" value="XM_038438651.1"/>
</dbReference>
<dbReference type="RefSeq" id="XP_038294580.1">
    <property type="nucleotide sequence ID" value="XM_038438652.1"/>
</dbReference>
<dbReference type="RefSeq" id="XP_038294581.1">
    <property type="nucleotide sequence ID" value="XM_038438653.1"/>
</dbReference>
<dbReference type="RefSeq" id="XP_038315857.1">
    <property type="nucleotide sequence ID" value="XM_038459929.1"/>
</dbReference>
<dbReference type="RefSeq" id="XP_038315858.1">
    <property type="nucleotide sequence ID" value="XM_038459930.1"/>
</dbReference>
<dbReference type="RefSeq" id="XP_038433075.1">
    <property type="nucleotide sequence ID" value="XM_038577147.1"/>
</dbReference>
<dbReference type="RefSeq" id="XP_038433076.1">
    <property type="nucleotide sequence ID" value="XM_038577148.1"/>
</dbReference>
<dbReference type="RefSeq" id="XP_038433077.1">
    <property type="nucleotide sequence ID" value="XM_038577149.1"/>
</dbReference>
<dbReference type="RefSeq" id="XP_038433078.1">
    <property type="nucleotide sequence ID" value="XM_038577150.1"/>
</dbReference>
<dbReference type="RefSeq" id="XP_038433079.1">
    <property type="nucleotide sequence ID" value="XM_038577151.1"/>
</dbReference>
<dbReference type="RefSeq" id="XP_038433080.1">
    <property type="nucleotide sequence ID" value="XM_038577152.1"/>
</dbReference>
<dbReference type="RefSeq" id="XP_038433081.1">
    <property type="nucleotide sequence ID" value="XM_038577153.1"/>
</dbReference>
<dbReference type="BMRB" id="P52211"/>
<dbReference type="SMR" id="P52211"/>
<dbReference type="FunCoup" id="P52211">
    <property type="interactions" value="8"/>
</dbReference>
<dbReference type="STRING" id="9615.ENSCAFP00000016137"/>
<dbReference type="PaxDb" id="9612-ENSCAFP00000016137"/>
<dbReference type="Ensembl" id="ENSCAFT00000039639.4">
    <property type="protein sequence ID" value="ENSCAFP00000035520.2"/>
    <property type="gene ID" value="ENSCAFG00000010955.6"/>
</dbReference>
<dbReference type="Ensembl" id="ENSCAFT00030047493.1">
    <property type="protein sequence ID" value="ENSCAFP00030041526.1"/>
    <property type="gene ID" value="ENSCAFG00030025721.1"/>
</dbReference>
<dbReference type="Ensembl" id="ENSCAFT00040033782.1">
    <property type="protein sequence ID" value="ENSCAFP00040029403.1"/>
    <property type="gene ID" value="ENSCAFG00040018275.1"/>
</dbReference>
<dbReference type="Ensembl" id="ENSCAFT00845040615.1">
    <property type="protein sequence ID" value="ENSCAFP00845031790.1"/>
    <property type="gene ID" value="ENSCAFG00845022996.1"/>
</dbReference>
<dbReference type="GeneID" id="403987"/>
<dbReference type="VEuPathDB" id="HostDB:ENSCAFG00845022996"/>
<dbReference type="VGNC" id="VGNC:45157">
    <property type="gene designation" value="PTHLH"/>
</dbReference>
<dbReference type="eggNOG" id="ENOG502S3J9">
    <property type="taxonomic scope" value="Eukaryota"/>
</dbReference>
<dbReference type="GeneTree" id="ENSGT00390000004933"/>
<dbReference type="InParanoid" id="P52211"/>
<dbReference type="OrthoDB" id="9892514at2759"/>
<dbReference type="Reactome" id="R-CFA-373080">
    <property type="pathway name" value="Class B/2 (Secretin family receptors)"/>
</dbReference>
<dbReference type="Proteomes" id="UP000002254">
    <property type="component" value="Chromosome 27"/>
</dbReference>
<dbReference type="Proteomes" id="UP000694429">
    <property type="component" value="Chromosome 27"/>
</dbReference>
<dbReference type="Proteomes" id="UP000694542">
    <property type="component" value="Chromosome 27"/>
</dbReference>
<dbReference type="Proteomes" id="UP000805418">
    <property type="component" value="Chromosome 27"/>
</dbReference>
<dbReference type="Bgee" id="ENSCAFG00000010955">
    <property type="expression patterns" value="Expressed in placenta and 45 other cell types or tissues"/>
</dbReference>
<dbReference type="GO" id="GO:0005737">
    <property type="term" value="C:cytoplasm"/>
    <property type="evidence" value="ECO:0007669"/>
    <property type="project" value="UniProtKB-SubCell"/>
</dbReference>
<dbReference type="GO" id="GO:0005576">
    <property type="term" value="C:extracellular region"/>
    <property type="evidence" value="ECO:0007669"/>
    <property type="project" value="UniProtKB-SubCell"/>
</dbReference>
<dbReference type="GO" id="GO:0005634">
    <property type="term" value="C:nucleus"/>
    <property type="evidence" value="ECO:0007669"/>
    <property type="project" value="UniProtKB-SubCell"/>
</dbReference>
<dbReference type="GO" id="GO:0005179">
    <property type="term" value="F:hormone activity"/>
    <property type="evidence" value="ECO:0000318"/>
    <property type="project" value="GO_Central"/>
</dbReference>
<dbReference type="GO" id="GO:0051428">
    <property type="term" value="F:peptide hormone receptor binding"/>
    <property type="evidence" value="ECO:0000250"/>
    <property type="project" value="UniProtKB"/>
</dbReference>
<dbReference type="GO" id="GO:0007189">
    <property type="term" value="P:adenylate cyclase-activating G protein-coupled receptor signaling pathway"/>
    <property type="evidence" value="ECO:0000318"/>
    <property type="project" value="GO_Central"/>
</dbReference>
<dbReference type="GO" id="GO:0030282">
    <property type="term" value="P:bone mineralization"/>
    <property type="evidence" value="ECO:0007669"/>
    <property type="project" value="InterPro"/>
</dbReference>
<dbReference type="GO" id="GO:0002076">
    <property type="term" value="P:osteoblast development"/>
    <property type="evidence" value="ECO:0000318"/>
    <property type="project" value="GO_Central"/>
</dbReference>
<dbReference type="GO" id="GO:0032330">
    <property type="term" value="P:regulation of chondrocyte differentiation"/>
    <property type="evidence" value="ECO:0000318"/>
    <property type="project" value="GO_Central"/>
</dbReference>
<dbReference type="InterPro" id="IPR003626">
    <property type="entry name" value="PTH-rel"/>
</dbReference>
<dbReference type="InterPro" id="IPR001415">
    <property type="entry name" value="PTH/PTH-rel"/>
</dbReference>
<dbReference type="PANTHER" id="PTHR17223">
    <property type="entry name" value="PARATHYROID HORMONE-RELATED"/>
    <property type="match status" value="1"/>
</dbReference>
<dbReference type="PANTHER" id="PTHR17223:SF0">
    <property type="entry name" value="PARATHYROID HORMONE-RELATED PROTEIN"/>
    <property type="match status" value="1"/>
</dbReference>
<dbReference type="Pfam" id="PF01279">
    <property type="entry name" value="Parathyroid"/>
    <property type="match status" value="1"/>
</dbReference>
<dbReference type="SMART" id="SM00087">
    <property type="entry name" value="PTH"/>
    <property type="match status" value="1"/>
</dbReference>
<dbReference type="PROSITE" id="PS00335">
    <property type="entry name" value="PARATHYROID"/>
    <property type="match status" value="1"/>
</dbReference>
<accession>P52211</accession>
<name>PTHR_CANLF</name>
<proteinExistence type="evidence at transcript level"/>
<evidence type="ECO:0000250" key="1">
    <source>
        <dbReference type="UniProtKB" id="P12272"/>
    </source>
</evidence>
<evidence type="ECO:0000250" key="2">
    <source>
        <dbReference type="UniProtKB" id="P22858"/>
    </source>
</evidence>
<evidence type="ECO:0000255" key="3"/>
<evidence type="ECO:0000256" key="4">
    <source>
        <dbReference type="SAM" id="MobiDB-lite"/>
    </source>
</evidence>
<evidence type="ECO:0000305" key="5"/>
<gene>
    <name type="primary">PTHLH</name>
</gene>
<keyword id="KW-0106">Calcium</keyword>
<keyword id="KW-0165">Cleavage on pair of basic residues</keyword>
<keyword id="KW-0963">Cytoplasm</keyword>
<keyword id="KW-0372">Hormone</keyword>
<keyword id="KW-0539">Nucleus</keyword>
<keyword id="KW-1185">Reference proteome</keyword>
<keyword id="KW-0964">Secreted</keyword>
<keyword id="KW-0732">Signal</keyword>
<feature type="signal peptide" evidence="3">
    <location>
        <begin position="1"/>
        <end position="24"/>
    </location>
</feature>
<feature type="propeptide" id="PRO_0000023220" evidence="1">
    <location>
        <begin position="25"/>
        <end position="34"/>
    </location>
</feature>
<feature type="chain" id="PRO_0000023221" description="Parathyroid hormone-related protein">
    <location>
        <begin position="37"/>
        <end position="177"/>
    </location>
</feature>
<feature type="peptide" id="PRO_0000023222" description="Osteostatin" evidence="1">
    <location>
        <begin position="143"/>
        <end position="175"/>
    </location>
</feature>
<feature type="region of interest" description="Important for receptor binding" evidence="1">
    <location>
        <begin position="57"/>
        <end position="68"/>
    </location>
</feature>
<feature type="region of interest" description="Disordered" evidence="4">
    <location>
        <begin position="74"/>
        <end position="177"/>
    </location>
</feature>
<feature type="short sequence motif" description="Nuclear localization signal" evidence="1">
    <location>
        <begin position="108"/>
        <end position="129"/>
    </location>
</feature>
<feature type="compositionally biased region" description="Polar residues" evidence="4">
    <location>
        <begin position="76"/>
        <end position="90"/>
    </location>
</feature>
<feature type="compositionally biased region" description="Basic and acidic residues" evidence="4">
    <location>
        <begin position="109"/>
        <end position="118"/>
    </location>
</feature>
<feature type="compositionally biased region" description="Basic residues" evidence="4">
    <location>
        <begin position="122"/>
        <end position="132"/>
    </location>
</feature>
<organism>
    <name type="scientific">Canis lupus familiaris</name>
    <name type="common">Dog</name>
    <name type="synonym">Canis familiaris</name>
    <dbReference type="NCBI Taxonomy" id="9615"/>
    <lineage>
        <taxon>Eukaryota</taxon>
        <taxon>Metazoa</taxon>
        <taxon>Chordata</taxon>
        <taxon>Craniata</taxon>
        <taxon>Vertebrata</taxon>
        <taxon>Euteleostomi</taxon>
        <taxon>Mammalia</taxon>
        <taxon>Eutheria</taxon>
        <taxon>Laurasiatheria</taxon>
        <taxon>Carnivora</taxon>
        <taxon>Caniformia</taxon>
        <taxon>Canidae</taxon>
        <taxon>Canis</taxon>
    </lineage>
</organism>